<dbReference type="EC" id="1.14.14.16" evidence="1 2"/>
<dbReference type="EMBL" id="M83939">
    <property type="protein sequence ID" value="AAA31080.1"/>
    <property type="molecule type" value="Genomic_DNA"/>
</dbReference>
<dbReference type="EMBL" id="AF490410">
    <property type="protein sequence ID" value="AAM11646.1"/>
    <property type="molecule type" value="Genomic_DNA"/>
</dbReference>
<dbReference type="EMBL" id="AL773560">
    <property type="protein sequence ID" value="CAN59658.1"/>
    <property type="molecule type" value="Genomic_DNA"/>
</dbReference>
<dbReference type="PIR" id="S28169">
    <property type="entry name" value="A32525"/>
</dbReference>
<dbReference type="RefSeq" id="NP_999598.1">
    <property type="nucleotide sequence ID" value="NM_214433.1"/>
</dbReference>
<dbReference type="SMR" id="P15540"/>
<dbReference type="FunCoup" id="P15540">
    <property type="interactions" value="43"/>
</dbReference>
<dbReference type="STRING" id="9823.ENSSSCP00000062899"/>
<dbReference type="PaxDb" id="9823-ENSSSCP00000001529"/>
<dbReference type="Ensembl" id="ENSSSCT00000001571.5">
    <property type="protein sequence ID" value="ENSSSCP00000001529.2"/>
    <property type="gene ID" value="ENSSSCG00000001428.6"/>
</dbReference>
<dbReference type="Ensembl" id="ENSSSCT00030070209.1">
    <property type="protein sequence ID" value="ENSSSCP00030032011.1"/>
    <property type="gene ID" value="ENSSSCG00030050353.1"/>
</dbReference>
<dbReference type="Ensembl" id="ENSSSCT00035083801.1">
    <property type="protein sequence ID" value="ENSSSCP00035034843.1"/>
    <property type="gene ID" value="ENSSSCG00035062342.1"/>
</dbReference>
<dbReference type="Ensembl" id="ENSSSCT00040073731.1">
    <property type="protein sequence ID" value="ENSSSCP00040031580.1"/>
    <property type="gene ID" value="ENSSSCG00040054409.1"/>
</dbReference>
<dbReference type="Ensembl" id="ENSSSCT00085020983">
    <property type="protein sequence ID" value="ENSSSCP00085014455"/>
    <property type="gene ID" value="ENSSSCG00085011229"/>
</dbReference>
<dbReference type="Ensembl" id="ENSSSCT00090028831">
    <property type="protein sequence ID" value="ENSSSCP00090017777"/>
    <property type="gene ID" value="ENSSSCG00090016379"/>
</dbReference>
<dbReference type="Ensembl" id="ENSSSCT00105034525">
    <property type="protein sequence ID" value="ENSSSCP00105024095"/>
    <property type="gene ID" value="ENSSSCG00105017971"/>
</dbReference>
<dbReference type="Ensembl" id="ENSSSCT00130041396">
    <property type="protein sequence ID" value="ENSSSCP00130029171"/>
    <property type="gene ID" value="ENSSSCG00130021353"/>
</dbReference>
<dbReference type="GeneID" id="403337"/>
<dbReference type="KEGG" id="ssc:403337"/>
<dbReference type="CTD" id="13079"/>
<dbReference type="VGNC" id="VGNC:103369">
    <property type="gene designation" value="CYP21A1"/>
</dbReference>
<dbReference type="eggNOG" id="KOG0156">
    <property type="taxonomic scope" value="Eukaryota"/>
</dbReference>
<dbReference type="GeneTree" id="ENSGT00940000158338"/>
<dbReference type="InParanoid" id="P15540"/>
<dbReference type="OMA" id="RICVHEM"/>
<dbReference type="OrthoDB" id="2789670at2759"/>
<dbReference type="TreeFam" id="TF105095"/>
<dbReference type="Reactome" id="R-SSC-193993">
    <property type="pathway name" value="Mineralocorticoid biosynthesis"/>
</dbReference>
<dbReference type="Reactome" id="R-SSC-194002">
    <property type="pathway name" value="Glucocorticoid biosynthesis"/>
</dbReference>
<dbReference type="Reactome" id="R-SSC-211976">
    <property type="pathway name" value="Endogenous sterols"/>
</dbReference>
<dbReference type="Proteomes" id="UP000008227">
    <property type="component" value="Chromosome 7"/>
</dbReference>
<dbReference type="Proteomes" id="UP000314985">
    <property type="component" value="Unplaced"/>
</dbReference>
<dbReference type="Proteomes" id="UP000694570">
    <property type="component" value="Unplaced"/>
</dbReference>
<dbReference type="Proteomes" id="UP000694571">
    <property type="component" value="Unplaced"/>
</dbReference>
<dbReference type="Proteomes" id="UP000694720">
    <property type="component" value="Unplaced"/>
</dbReference>
<dbReference type="Proteomes" id="UP000694722">
    <property type="component" value="Unplaced"/>
</dbReference>
<dbReference type="Proteomes" id="UP000694723">
    <property type="component" value="Unplaced"/>
</dbReference>
<dbReference type="Proteomes" id="UP000694724">
    <property type="component" value="Unplaced"/>
</dbReference>
<dbReference type="Proteomes" id="UP000694725">
    <property type="component" value="Unplaced"/>
</dbReference>
<dbReference type="Proteomes" id="UP000694726">
    <property type="component" value="Unplaced"/>
</dbReference>
<dbReference type="Proteomes" id="UP000694727">
    <property type="component" value="Unplaced"/>
</dbReference>
<dbReference type="Proteomes" id="UP000694728">
    <property type="component" value="Unplaced"/>
</dbReference>
<dbReference type="Bgee" id="ENSSSCG00000001428">
    <property type="expression patterns" value="Expressed in semimembranosus muscle and 11 other cell types or tissues"/>
</dbReference>
<dbReference type="ExpressionAtlas" id="P15540">
    <property type="expression patterns" value="baseline and differential"/>
</dbReference>
<dbReference type="GO" id="GO:0005789">
    <property type="term" value="C:endoplasmic reticulum membrane"/>
    <property type="evidence" value="ECO:0007669"/>
    <property type="project" value="UniProtKB-SubCell"/>
</dbReference>
<dbReference type="GO" id="GO:0103069">
    <property type="term" value="F:17-hydroxyprogesterone 21-hydroxylase activity"/>
    <property type="evidence" value="ECO:0000250"/>
    <property type="project" value="UniProtKB"/>
</dbReference>
<dbReference type="GO" id="GO:0020037">
    <property type="term" value="F:heme binding"/>
    <property type="evidence" value="ECO:0000250"/>
    <property type="project" value="UniProtKB"/>
</dbReference>
<dbReference type="GO" id="GO:0005506">
    <property type="term" value="F:iron ion binding"/>
    <property type="evidence" value="ECO:0007669"/>
    <property type="project" value="InterPro"/>
</dbReference>
<dbReference type="GO" id="GO:0106309">
    <property type="term" value="F:progesterone 21-hydroxylase activity"/>
    <property type="evidence" value="ECO:0000250"/>
    <property type="project" value="UniProtKB"/>
</dbReference>
<dbReference type="GO" id="GO:0004509">
    <property type="term" value="F:steroid 21-monooxygenase activity"/>
    <property type="evidence" value="ECO:0000318"/>
    <property type="project" value="GO_Central"/>
</dbReference>
<dbReference type="GO" id="GO:0005496">
    <property type="term" value="F:steroid binding"/>
    <property type="evidence" value="ECO:0007669"/>
    <property type="project" value="UniProtKB-KW"/>
</dbReference>
<dbReference type="GO" id="GO:0008395">
    <property type="term" value="F:steroid hydroxylase activity"/>
    <property type="evidence" value="ECO:0000250"/>
    <property type="project" value="UniProtKB"/>
</dbReference>
<dbReference type="GO" id="GO:0006704">
    <property type="term" value="P:glucocorticoid biosynthetic process"/>
    <property type="evidence" value="ECO:0000318"/>
    <property type="project" value="GO_Central"/>
</dbReference>
<dbReference type="GO" id="GO:0008202">
    <property type="term" value="P:steroid metabolic process"/>
    <property type="evidence" value="ECO:0000250"/>
    <property type="project" value="UniProtKB"/>
</dbReference>
<dbReference type="CDD" id="cd20674">
    <property type="entry name" value="CYP21"/>
    <property type="match status" value="1"/>
</dbReference>
<dbReference type="FunFam" id="1.10.630.10:FF:000049">
    <property type="entry name" value="steroid 21-hydroxylase isoform X1"/>
    <property type="match status" value="1"/>
</dbReference>
<dbReference type="Gene3D" id="1.10.630.10">
    <property type="entry name" value="Cytochrome P450"/>
    <property type="match status" value="1"/>
</dbReference>
<dbReference type="InterPro" id="IPR001128">
    <property type="entry name" value="Cyt_P450"/>
</dbReference>
<dbReference type="InterPro" id="IPR017972">
    <property type="entry name" value="Cyt_P450_CS"/>
</dbReference>
<dbReference type="InterPro" id="IPR002401">
    <property type="entry name" value="Cyt_P450_E_grp-I"/>
</dbReference>
<dbReference type="InterPro" id="IPR036396">
    <property type="entry name" value="Cyt_P450_sf"/>
</dbReference>
<dbReference type="PANTHER" id="PTHR24289">
    <property type="entry name" value="STEROID 17-ALPHA-HYDROXYLASE/17,20 LYASE"/>
    <property type="match status" value="1"/>
</dbReference>
<dbReference type="PANTHER" id="PTHR24289:SF17">
    <property type="entry name" value="STEROID 21-HYDROXYLASE ISOFORM X1"/>
    <property type="match status" value="1"/>
</dbReference>
<dbReference type="Pfam" id="PF00067">
    <property type="entry name" value="p450"/>
    <property type="match status" value="1"/>
</dbReference>
<dbReference type="PRINTS" id="PR00463">
    <property type="entry name" value="EP450I"/>
</dbReference>
<dbReference type="PRINTS" id="PR00385">
    <property type="entry name" value="P450"/>
</dbReference>
<dbReference type="SUPFAM" id="SSF48264">
    <property type="entry name" value="Cytochrome P450"/>
    <property type="match status" value="1"/>
</dbReference>
<dbReference type="PROSITE" id="PS00086">
    <property type="entry name" value="CYTOCHROME_P450"/>
    <property type="match status" value="1"/>
</dbReference>
<name>CP21A_PIG</name>
<accession>P15540</accession>
<accession>A5A8W6</accession>
<accession>Q02390</accession>
<comment type="function">
    <text evidence="1 2">A cytochrome P450 monooxygenase that plays a major role in adrenal steroidogenesis. Catalyzes the hydroxylation at C-21 of progesterone and 17alpha-hydroxyprogesterone to respectively form 11-deoxycorticosterone and 11-deoxycortisol, intermediate metabolites in the biosynthetic pathway of mineralocorticoids and glucocorticoids. Mechanistically, uses molecular oxygen inserting one oxygen atom into a substrate, and reducing the second into a water molecule, with two electrons provided by NADPH via cytochrome P450 reductase (CPR; NADPH-ferrihemoprotein reductase).</text>
</comment>
<comment type="catalytic activity">
    <reaction evidence="1 2">
        <text>progesterone + reduced [NADPH--hemoprotein reductase] + O2 = 21-hydroxyprogesterone + oxidized [NADPH--hemoprotein reductase] + H2O + H(+)</text>
        <dbReference type="Rhea" id="RHEA:50304"/>
        <dbReference type="Rhea" id="RHEA-COMP:11964"/>
        <dbReference type="Rhea" id="RHEA-COMP:11965"/>
        <dbReference type="ChEBI" id="CHEBI:15377"/>
        <dbReference type="ChEBI" id="CHEBI:15378"/>
        <dbReference type="ChEBI" id="CHEBI:15379"/>
        <dbReference type="ChEBI" id="CHEBI:16973"/>
        <dbReference type="ChEBI" id="CHEBI:17026"/>
        <dbReference type="ChEBI" id="CHEBI:57618"/>
        <dbReference type="ChEBI" id="CHEBI:58210"/>
        <dbReference type="EC" id="1.14.14.16"/>
    </reaction>
    <physiologicalReaction direction="left-to-right" evidence="1 2">
        <dbReference type="Rhea" id="RHEA:50305"/>
    </physiologicalReaction>
</comment>
<comment type="catalytic activity">
    <reaction evidence="1 2">
        <text>17alpha-hydroxyprogesterone + reduced [NADPH--hemoprotein reductase] + O2 = 11-deoxycortisol + oxidized [NADPH--hemoprotein reductase] + H2O + H(+)</text>
        <dbReference type="Rhea" id="RHEA:50308"/>
        <dbReference type="Rhea" id="RHEA-COMP:11964"/>
        <dbReference type="Rhea" id="RHEA-COMP:11965"/>
        <dbReference type="ChEBI" id="CHEBI:15377"/>
        <dbReference type="ChEBI" id="CHEBI:15378"/>
        <dbReference type="ChEBI" id="CHEBI:15379"/>
        <dbReference type="ChEBI" id="CHEBI:17252"/>
        <dbReference type="ChEBI" id="CHEBI:28324"/>
        <dbReference type="ChEBI" id="CHEBI:57618"/>
        <dbReference type="ChEBI" id="CHEBI:58210"/>
        <dbReference type="EC" id="1.14.14.16"/>
    </reaction>
    <physiologicalReaction direction="left-to-right" evidence="1 2">
        <dbReference type="Rhea" id="RHEA:50309"/>
    </physiologicalReaction>
</comment>
<comment type="cofactor">
    <cofactor evidence="1 2">
        <name>heme b</name>
        <dbReference type="ChEBI" id="CHEBI:60344"/>
    </cofactor>
</comment>
<comment type="subcellular location">
    <subcellularLocation>
        <location evidence="2">Endoplasmic reticulum membrane</location>
        <topology evidence="2">Peripheral membrane protein</topology>
    </subcellularLocation>
    <subcellularLocation>
        <location evidence="2">Microsome membrane</location>
        <topology evidence="2">Peripheral membrane protein</topology>
    </subcellularLocation>
</comment>
<comment type="domain">
    <text evidence="2">The leucine-rich hydrophobic amino acid N-terminal region probably helps to anchor the protein to the microsomal membrane.</text>
</comment>
<comment type="similarity">
    <text evidence="4">Belongs to the cytochrome P450 family.</text>
</comment>
<evidence type="ECO:0000250" key="1">
    <source>
        <dbReference type="UniProtKB" id="P00191"/>
    </source>
</evidence>
<evidence type="ECO:0000250" key="2">
    <source>
        <dbReference type="UniProtKB" id="P08686"/>
    </source>
</evidence>
<evidence type="ECO:0000303" key="3">
    <source>
    </source>
</evidence>
<evidence type="ECO:0000305" key="4"/>
<proteinExistence type="evidence at protein level"/>
<organism>
    <name type="scientific">Sus scrofa</name>
    <name type="common">Pig</name>
    <dbReference type="NCBI Taxonomy" id="9823"/>
    <lineage>
        <taxon>Eukaryota</taxon>
        <taxon>Metazoa</taxon>
        <taxon>Chordata</taxon>
        <taxon>Craniata</taxon>
        <taxon>Vertebrata</taxon>
        <taxon>Euteleostomi</taxon>
        <taxon>Mammalia</taxon>
        <taxon>Eutheria</taxon>
        <taxon>Laurasiatheria</taxon>
        <taxon>Artiodactyla</taxon>
        <taxon>Suina</taxon>
        <taxon>Suidae</taxon>
        <taxon>Sus</taxon>
    </lineage>
</organism>
<feature type="chain" id="PRO_0000051978" description="Steroid 21-hydroxylase">
    <location>
        <begin position="1"/>
        <end position="492"/>
    </location>
</feature>
<feature type="binding site" evidence="2">
    <location>
        <position position="92"/>
    </location>
    <ligand>
        <name>heme b</name>
        <dbReference type="ChEBI" id="CHEBI:60344"/>
    </ligand>
</feature>
<feature type="binding site" evidence="2">
    <location>
        <position position="121"/>
    </location>
    <ligand>
        <name>heme b</name>
        <dbReference type="ChEBI" id="CHEBI:60344"/>
    </ligand>
</feature>
<feature type="binding site" evidence="1">
    <location>
        <position position="232"/>
    </location>
    <ligand>
        <name>17alpha-hydroxyprogesterone</name>
        <dbReference type="ChEBI" id="CHEBI:17252"/>
    </ligand>
</feature>
<feature type="binding site" evidence="2">
    <location>
        <position position="232"/>
    </location>
    <ligand>
        <name>progesterone</name>
        <dbReference type="ChEBI" id="CHEBI:17026"/>
    </ligand>
</feature>
<feature type="binding site" evidence="2">
    <location>
        <position position="364"/>
    </location>
    <ligand>
        <name>heme b</name>
        <dbReference type="ChEBI" id="CHEBI:60344"/>
    </ligand>
</feature>
<feature type="binding site" evidence="2">
    <location>
        <position position="425"/>
    </location>
    <ligand>
        <name>heme b</name>
        <dbReference type="ChEBI" id="CHEBI:60344"/>
    </ligand>
</feature>
<feature type="binding site" description="axial binding residue" evidence="2">
    <location>
        <position position="427"/>
    </location>
    <ligand>
        <name>heme b</name>
        <dbReference type="ChEBI" id="CHEBI:60344"/>
    </ligand>
    <ligandPart>
        <name>Fe</name>
        <dbReference type="ChEBI" id="CHEBI:18248"/>
    </ligandPart>
</feature>
<feature type="sequence conflict" description="In Ref. 1; AA sequence." evidence="4" ref="1">
    <original>L</original>
    <variation>T</variation>
    <location>
        <position position="10"/>
    </location>
</feature>
<feature type="sequence conflict" description="In Ref. 1; AA sequence." evidence="4" ref="1">
    <original>L</original>
    <variation>K</variation>
    <location>
        <position position="13"/>
    </location>
</feature>
<feature type="sequence conflict" description="In Ref. 1; AA sequence." evidence="4" ref="1">
    <original>R</original>
    <variation>K</variation>
    <location>
        <position position="55"/>
    </location>
</feature>
<feature type="sequence conflict" description="In Ref. 1; AA sequence." evidence="4" ref="1">
    <original>E</original>
    <variation>C</variation>
    <location>
        <position position="141"/>
    </location>
</feature>
<feature type="sequence conflict" description="In Ref. 1; AA sequence." evidence="4" ref="1">
    <original>E</original>
    <variation>D</variation>
    <location>
        <position position="201"/>
    </location>
</feature>
<feature type="sequence conflict" description="In Ref. 1; AA sequence." evidence="4" ref="1">
    <original>H</original>
    <variation>I</variation>
    <location>
        <position position="391"/>
    </location>
</feature>
<feature type="sequence conflict" description="In Ref. 1; AA sequence." evidence="4" ref="1">
    <original>HPH</original>
    <variation>VPY</variation>
    <location>
        <begin position="463"/>
        <end position="465"/>
    </location>
</feature>
<gene>
    <name type="primary">CYP21</name>
    <name type="synonym">CYP21A1</name>
    <name type="synonym">CYP21A3</name>
</gene>
<reference key="1">
    <citation type="journal article" date="1987" name="Arch. Biochem. Biophys.">
        <title>Complete amino acid sequence of 21-hydroxylase cytochrome P-450 from porcine adrenal microsomes.</title>
        <authorList>
            <person name="Haniu M."/>
            <person name="Yanagibashi K."/>
            <person name="Hall P.F."/>
            <person name="Shively J.E."/>
        </authorList>
    </citation>
    <scope>PROTEIN SEQUENCE</scope>
    <source>
        <tissue>Adrenal gland</tissue>
    </source>
</reference>
<reference key="2">
    <citation type="journal article" date="1992" name="Biochim. Biophys. Acta">
        <title>Sequences of the swine 21-hydroxylase gene (CYP21) and a portion of the opposite-strand overlapping gene of unknown function previously described in human.</title>
        <authorList>
            <person name="Burghelle-Mayeur C."/>
            <person name="Geffrotin C."/>
            <person name="Vaiman M."/>
        </authorList>
    </citation>
    <scope>NUCLEOTIDE SEQUENCE [GENOMIC DNA]</scope>
</reference>
<reference key="3">
    <citation type="journal article" date="2003" name="J. Anim. Sci.">
        <title>Detection of quantitative trait loci for fat androstenone levels in pigs.</title>
        <authorList>
            <person name="Quintanilla R."/>
            <person name="Demeure O."/>
            <person name="Bidanel J.P."/>
            <person name="Milan D."/>
            <person name="Iannuccelli N."/>
            <person name="Amigues Y."/>
            <person name="Gruand J."/>
            <person name="Renard C."/>
            <person name="Chevalet C."/>
            <person name="Bonneau M."/>
        </authorList>
    </citation>
    <scope>NUCLEOTIDE SEQUENCE [GENOMIC DNA]</scope>
    <source>
        <strain>Meishan</strain>
    </source>
</reference>
<reference key="4">
    <citation type="submission" date="2007-05" db="EMBL/GenBank/DDBJ databases">
        <authorList>
            <consortium name="Porcine genome sequencing project"/>
        </authorList>
    </citation>
    <scope>NUCLEOTIDE SEQUENCE [LARGE SCALE GENOMIC DNA]</scope>
</reference>
<reference key="5">
    <citation type="journal article" date="1990" name="Anim. Genet.">
        <title>The swine steroid 21-hydroxylase gene (CYP21): cloning and mapping within the swine leucocyte antigen complex.</title>
        <authorList>
            <person name="Geffrotin C."/>
            <person name="Chardon P."/>
            <person name="de Andres-Cara D.F."/>
            <person name="Feil R."/>
            <person name="Renard C."/>
            <person name="Vaiman M."/>
        </authorList>
    </citation>
    <scope>NUCLEOTIDE SEQUENCE [GENOMIC DNA] OF 1-99</scope>
</reference>
<keyword id="KW-0903">Direct protein sequencing</keyword>
<keyword id="KW-0256">Endoplasmic reticulum</keyword>
<keyword id="KW-0349">Heme</keyword>
<keyword id="KW-0408">Iron</keyword>
<keyword id="KW-0446">Lipid-binding</keyword>
<keyword id="KW-0472">Membrane</keyword>
<keyword id="KW-0479">Metal-binding</keyword>
<keyword id="KW-0492">Microsome</keyword>
<keyword id="KW-0503">Monooxygenase</keyword>
<keyword id="KW-0560">Oxidoreductase</keyword>
<keyword id="KW-1185">Reference proteome</keyword>
<keyword id="KW-0754">Steroid-binding</keyword>
<keyword id="KW-0755">Steroidogenesis</keyword>
<protein>
    <recommendedName>
        <fullName evidence="3">Steroid 21-hydroxylase</fullName>
        <ecNumber evidence="1 2">1.14.14.16</ecNumber>
    </recommendedName>
    <alternativeName>
        <fullName>21-OHase</fullName>
    </alternativeName>
    <alternativeName>
        <fullName>Cytochrome P-450c21</fullName>
    </alternativeName>
    <alternativeName>
        <fullName>Cytochrome P450 21</fullName>
    </alternativeName>
    <alternativeName>
        <fullName>Cytochrome P450 XXI</fullName>
    </alternativeName>
    <alternativeName>
        <fullName>Cytochrome P450-C21</fullName>
    </alternativeName>
</protein>
<sequence length="492" mass="55620">MVLVWLLLLLTLLAGARLLWGQWKLRNLHLPPLVPGFLHLLQPNLPIYLLGLTQRLGPIYRLRLGLQDVVVLNSKRTIEEALVRKWVDFAGRPQIPSYKLASQHCPDISLGDYSLFWKAHKKLTRSALLLGVRSSMEPRVEQLTQEFCERMRAQAGTPVTIQKEFSVLTCSIICCLTFGDKEDTLVHALHDCVQDLMKTWEHWSIQILDMVPFLRFFPSPGLRRLKQAIENRDHLVEKQLRRHKESMVAGQWRDMLDYMLQEAGRQRVEEGQGQLLEGHVHMSVVDLFIGGTETTANTLSWAVVYLLHHPEIQWRLQEELDRELGPGAAGSRVPYKDRARLPLLNATIAEVLRLRPVVPLALPHRATRPSSIFGYDIPEGTVVIPNLQGAHLDETVWEQPHEFRPDRFLAPGANPSALAFGCGARVCLGEPLARLELFVVLVQLLQAFTLLPPEGALPSLQPHPHSGINLKVQPFQVRLQPRGGRGEGPGPR</sequence>